<dbReference type="EC" id="3.5.4.10" evidence="1"/>
<dbReference type="EMBL" id="CR936257">
    <property type="protein sequence ID" value="CAI48457.1"/>
    <property type="molecule type" value="Genomic_DNA"/>
</dbReference>
<dbReference type="RefSeq" id="WP_011322093.1">
    <property type="nucleotide sequence ID" value="NC_007426.1"/>
</dbReference>
<dbReference type="SMR" id="Q3ITS6"/>
<dbReference type="STRING" id="348780.NP_0732A"/>
<dbReference type="EnsemblBacteria" id="CAI48457">
    <property type="protein sequence ID" value="CAI48457"/>
    <property type="gene ID" value="NP_0732A"/>
</dbReference>
<dbReference type="GeneID" id="3703076"/>
<dbReference type="KEGG" id="nph:NP_0732A"/>
<dbReference type="eggNOG" id="arCOG04727">
    <property type="taxonomic scope" value="Archaea"/>
</dbReference>
<dbReference type="HOGENOM" id="CLU_1352116_0_0_2"/>
<dbReference type="OrthoDB" id="92928at2157"/>
<dbReference type="UniPathway" id="UPA00074">
    <property type="reaction ID" value="UER00135"/>
</dbReference>
<dbReference type="Proteomes" id="UP000002698">
    <property type="component" value="Chromosome"/>
</dbReference>
<dbReference type="GO" id="GO:0003937">
    <property type="term" value="F:IMP cyclohydrolase activity"/>
    <property type="evidence" value="ECO:0007669"/>
    <property type="project" value="UniProtKB-UniRule"/>
</dbReference>
<dbReference type="GO" id="GO:0006189">
    <property type="term" value="P:'de novo' IMP biosynthetic process"/>
    <property type="evidence" value="ECO:0007669"/>
    <property type="project" value="UniProtKB-UniRule"/>
</dbReference>
<dbReference type="Gene3D" id="3.60.20.20">
    <property type="entry name" value="Inosine monophosphate cyclohydrolase-like"/>
    <property type="match status" value="1"/>
</dbReference>
<dbReference type="HAMAP" id="MF_00705">
    <property type="entry name" value="IMP_cyclohydrol"/>
    <property type="match status" value="1"/>
</dbReference>
<dbReference type="InterPro" id="IPR010191">
    <property type="entry name" value="IMP_cyclohydrolase"/>
</dbReference>
<dbReference type="InterPro" id="IPR020600">
    <property type="entry name" value="IMP_cyclohydrolase-like"/>
</dbReference>
<dbReference type="InterPro" id="IPR036795">
    <property type="entry name" value="IMP_cyclohydrolase-like_sf"/>
</dbReference>
<dbReference type="NCBIfam" id="NF003167">
    <property type="entry name" value="PRK04151.1"/>
    <property type="match status" value="1"/>
</dbReference>
<dbReference type="NCBIfam" id="TIGR01922">
    <property type="entry name" value="purO_arch"/>
    <property type="match status" value="1"/>
</dbReference>
<dbReference type="Pfam" id="PF07826">
    <property type="entry name" value="IMP_cyclohyd"/>
    <property type="match status" value="1"/>
</dbReference>
<dbReference type="PIRSF" id="PIRSF004866">
    <property type="entry name" value="IMP_cclhdr_arch"/>
    <property type="match status" value="1"/>
</dbReference>
<dbReference type="SUPFAM" id="SSF75569">
    <property type="entry name" value="Archaeal IMP cyclohydrolase PurO"/>
    <property type="match status" value="1"/>
</dbReference>
<proteinExistence type="inferred from homology"/>
<gene>
    <name evidence="1" type="primary">purO</name>
    <name type="ordered locus">NP_0732A</name>
</gene>
<sequence>MYVGRFIVVAPDRAAYRVSSRSFPNRRIVDRDGTLTVGPTEDAPETDNPYISYNCLRTVGDDYAVVGNGTQVDPIAEKLSLGYPPRDALAESLLALDYEKDDYDTPRIAGVVGDESYIGTVRRDALIVEAVEEPTLVATYEKSEPEPTSLGADDPSELAAELYDRDLEHPVCAAGVVADGDSFEVGYYNGE</sequence>
<reference key="1">
    <citation type="journal article" date="2005" name="Genome Res.">
        <title>Living with two extremes: conclusions from the genome sequence of Natronomonas pharaonis.</title>
        <authorList>
            <person name="Falb M."/>
            <person name="Pfeiffer F."/>
            <person name="Palm P."/>
            <person name="Rodewald K."/>
            <person name="Hickmann V."/>
            <person name="Tittor J."/>
            <person name="Oesterhelt D."/>
        </authorList>
    </citation>
    <scope>NUCLEOTIDE SEQUENCE [LARGE SCALE GENOMIC DNA]</scope>
    <source>
        <strain>ATCC 35678 / DSM 2160 / CIP 103997 / JCM 8858 / NBRC 14720 / NCIMB 2260 / Gabara</strain>
    </source>
</reference>
<keyword id="KW-0378">Hydrolase</keyword>
<keyword id="KW-0658">Purine biosynthesis</keyword>
<keyword id="KW-1185">Reference proteome</keyword>
<organism>
    <name type="scientific">Natronomonas pharaonis (strain ATCC 35678 / DSM 2160 / CIP 103997 / JCM 8858 / NBRC 14720 / NCIMB 2260 / Gabara)</name>
    <name type="common">Halobacterium pharaonis</name>
    <dbReference type="NCBI Taxonomy" id="348780"/>
    <lineage>
        <taxon>Archaea</taxon>
        <taxon>Methanobacteriati</taxon>
        <taxon>Methanobacteriota</taxon>
        <taxon>Stenosarchaea group</taxon>
        <taxon>Halobacteria</taxon>
        <taxon>Halobacteriales</taxon>
        <taxon>Haloarculaceae</taxon>
        <taxon>Natronomonas</taxon>
    </lineage>
</organism>
<evidence type="ECO:0000255" key="1">
    <source>
        <dbReference type="HAMAP-Rule" id="MF_00705"/>
    </source>
</evidence>
<comment type="function">
    <text evidence="1">Catalyzes the cyclization of 5-formylamidoimidazole-4-carboxamide ribonucleotide to IMP.</text>
</comment>
<comment type="catalytic activity">
    <reaction evidence="1">
        <text>IMP + H2O = 5-formamido-1-(5-phospho-D-ribosyl)imidazole-4-carboxamide</text>
        <dbReference type="Rhea" id="RHEA:18445"/>
        <dbReference type="ChEBI" id="CHEBI:15377"/>
        <dbReference type="ChEBI" id="CHEBI:58053"/>
        <dbReference type="ChEBI" id="CHEBI:58467"/>
        <dbReference type="EC" id="3.5.4.10"/>
    </reaction>
</comment>
<comment type="pathway">
    <text evidence="1">Purine metabolism; IMP biosynthesis via de novo pathway; IMP from 5-formamido-1-(5-phospho-D-ribosyl)imidazole-4-carboxamide: step 1/1.</text>
</comment>
<comment type="similarity">
    <text evidence="1">Belongs to the archaeal IMP cyclohydrolase family.</text>
</comment>
<name>PURO_NATPD</name>
<feature type="chain" id="PRO_0000349169" description="IMP cyclohydrolase">
    <location>
        <begin position="1"/>
        <end position="191"/>
    </location>
</feature>
<accession>Q3ITS6</accession>
<protein>
    <recommendedName>
        <fullName evidence="1">IMP cyclohydrolase</fullName>
        <ecNumber evidence="1">3.5.4.10</ecNumber>
    </recommendedName>
    <alternativeName>
        <fullName evidence="1">IMP synthase</fullName>
    </alternativeName>
    <alternativeName>
        <fullName evidence="1">Inosinicase</fullName>
    </alternativeName>
</protein>